<evidence type="ECO:0000255" key="1">
    <source>
        <dbReference type="HAMAP-Rule" id="MF_00523"/>
    </source>
</evidence>
<feature type="chain" id="PRO_0000264400" description="UDP-3-O-acylglucosamine N-acyltransferase 1">
    <location>
        <begin position="1"/>
        <end position="362"/>
    </location>
</feature>
<feature type="active site" description="Proton acceptor" evidence="1">
    <location>
        <position position="258"/>
    </location>
</feature>
<sequence>MTQPAFFKRPLPSTLAEIAASTGAQLVDASRGGIRIIGLASLDQAGPMHLAFFDNHKYAGQLAATKAGACLVSPRFEADVPAHVAVLRSKAPFRAFVSIARDFHGDALRPQSWFDNTAVAASAVIHPSAYLEDEVVIDPLAVIGPDVQIGRGSVIGSGAVIGPGVRIGRDCNVGAGTTIQATLIGNNVLIHPGCHIGQDGYGFIFFGSEGHVKVPQTGRVLIQNDVEIGAGTTIDRGSLRDTVIGEGTKIDNQVQIGHNVTIGRRCLLAAQIGLAGSLTIGDNVALGAKVGINNHLHIGDGAQVTAMSGVKDDIPANGRWGGYFAKPTRQWFRELLAVERLVRDGAPDAGSPKAAPKDRVIE</sequence>
<accession>Q3SRI1</accession>
<comment type="function">
    <text evidence="1">Catalyzes the N-acylation of UDP-3-O-acylglucosamine using 3-hydroxyacyl-ACP as the acyl donor. Is involved in the biosynthesis of lipid A, a phosphorylated glycolipid that anchors the lipopolysaccharide to the outer membrane of the cell.</text>
</comment>
<comment type="catalytic activity">
    <reaction evidence="1">
        <text>a UDP-3-O-[(3R)-3-hydroxyacyl]-alpha-D-glucosamine + a (3R)-hydroxyacyl-[ACP] = a UDP-2-N,3-O-bis[(3R)-3-hydroxyacyl]-alpha-D-glucosamine + holo-[ACP] + H(+)</text>
        <dbReference type="Rhea" id="RHEA:53836"/>
        <dbReference type="Rhea" id="RHEA-COMP:9685"/>
        <dbReference type="Rhea" id="RHEA-COMP:9945"/>
        <dbReference type="ChEBI" id="CHEBI:15378"/>
        <dbReference type="ChEBI" id="CHEBI:64479"/>
        <dbReference type="ChEBI" id="CHEBI:78827"/>
        <dbReference type="ChEBI" id="CHEBI:137740"/>
        <dbReference type="ChEBI" id="CHEBI:137748"/>
        <dbReference type="EC" id="2.3.1.191"/>
    </reaction>
</comment>
<comment type="pathway">
    <text evidence="1">Bacterial outer membrane biogenesis; LPS lipid A biosynthesis.</text>
</comment>
<comment type="subunit">
    <text evidence="1">Homotrimer.</text>
</comment>
<comment type="similarity">
    <text evidence="1">Belongs to the transferase hexapeptide repeat family. LpxD subfamily.</text>
</comment>
<dbReference type="EC" id="2.3.1.191" evidence="1"/>
<dbReference type="EMBL" id="CP000115">
    <property type="protein sequence ID" value="ABA05110.1"/>
    <property type="molecule type" value="Genomic_DNA"/>
</dbReference>
<dbReference type="RefSeq" id="WP_011315106.1">
    <property type="nucleotide sequence ID" value="NC_007406.1"/>
</dbReference>
<dbReference type="SMR" id="Q3SRI1"/>
<dbReference type="STRING" id="323098.Nwi_1850"/>
<dbReference type="KEGG" id="nwi:Nwi_1850"/>
<dbReference type="eggNOG" id="COG1044">
    <property type="taxonomic scope" value="Bacteria"/>
</dbReference>
<dbReference type="HOGENOM" id="CLU_049865_0_2_5"/>
<dbReference type="OrthoDB" id="9784739at2"/>
<dbReference type="UniPathway" id="UPA00973"/>
<dbReference type="Proteomes" id="UP000002531">
    <property type="component" value="Chromosome"/>
</dbReference>
<dbReference type="GO" id="GO:0016020">
    <property type="term" value="C:membrane"/>
    <property type="evidence" value="ECO:0007669"/>
    <property type="project" value="GOC"/>
</dbReference>
<dbReference type="GO" id="GO:0016410">
    <property type="term" value="F:N-acyltransferase activity"/>
    <property type="evidence" value="ECO:0007669"/>
    <property type="project" value="InterPro"/>
</dbReference>
<dbReference type="GO" id="GO:0009245">
    <property type="term" value="P:lipid A biosynthetic process"/>
    <property type="evidence" value="ECO:0007669"/>
    <property type="project" value="UniProtKB-UniRule"/>
</dbReference>
<dbReference type="CDD" id="cd03352">
    <property type="entry name" value="LbH_LpxD"/>
    <property type="match status" value="1"/>
</dbReference>
<dbReference type="Gene3D" id="2.160.10.10">
    <property type="entry name" value="Hexapeptide repeat proteins"/>
    <property type="match status" value="1"/>
</dbReference>
<dbReference type="Gene3D" id="3.40.1390.10">
    <property type="entry name" value="MurE/MurF, N-terminal domain"/>
    <property type="match status" value="1"/>
</dbReference>
<dbReference type="HAMAP" id="MF_00523">
    <property type="entry name" value="LpxD"/>
    <property type="match status" value="1"/>
</dbReference>
<dbReference type="InterPro" id="IPR001451">
    <property type="entry name" value="Hexapep"/>
</dbReference>
<dbReference type="InterPro" id="IPR018357">
    <property type="entry name" value="Hexapep_transf_CS"/>
</dbReference>
<dbReference type="InterPro" id="IPR007691">
    <property type="entry name" value="LpxD"/>
</dbReference>
<dbReference type="InterPro" id="IPR011004">
    <property type="entry name" value="Trimer_LpxA-like_sf"/>
</dbReference>
<dbReference type="InterPro" id="IPR020573">
    <property type="entry name" value="UDP_GlcNAc_AcTrfase_non-rep"/>
</dbReference>
<dbReference type="NCBIfam" id="TIGR01853">
    <property type="entry name" value="lipid_A_lpxD"/>
    <property type="match status" value="1"/>
</dbReference>
<dbReference type="NCBIfam" id="NF002060">
    <property type="entry name" value="PRK00892.1"/>
    <property type="match status" value="1"/>
</dbReference>
<dbReference type="PANTHER" id="PTHR43378">
    <property type="entry name" value="UDP-3-O-ACYLGLUCOSAMINE N-ACYLTRANSFERASE"/>
    <property type="match status" value="1"/>
</dbReference>
<dbReference type="PANTHER" id="PTHR43378:SF2">
    <property type="entry name" value="UDP-3-O-ACYLGLUCOSAMINE N-ACYLTRANSFERASE 1, MITOCHONDRIAL-RELATED"/>
    <property type="match status" value="1"/>
</dbReference>
<dbReference type="Pfam" id="PF00132">
    <property type="entry name" value="Hexapep"/>
    <property type="match status" value="2"/>
</dbReference>
<dbReference type="Pfam" id="PF14602">
    <property type="entry name" value="Hexapep_2"/>
    <property type="match status" value="1"/>
</dbReference>
<dbReference type="Pfam" id="PF04613">
    <property type="entry name" value="LpxD"/>
    <property type="match status" value="1"/>
</dbReference>
<dbReference type="SUPFAM" id="SSF51161">
    <property type="entry name" value="Trimeric LpxA-like enzymes"/>
    <property type="match status" value="1"/>
</dbReference>
<dbReference type="PROSITE" id="PS00101">
    <property type="entry name" value="HEXAPEP_TRANSFERASES"/>
    <property type="match status" value="2"/>
</dbReference>
<protein>
    <recommendedName>
        <fullName evidence="1">UDP-3-O-acylglucosamine N-acyltransferase 1</fullName>
        <ecNumber evidence="1">2.3.1.191</ecNumber>
    </recommendedName>
</protein>
<name>LPXD1_NITWN</name>
<gene>
    <name evidence="1" type="primary">lpxD1</name>
    <name type="ordered locus">Nwi_1850</name>
</gene>
<proteinExistence type="inferred from homology"/>
<reference key="1">
    <citation type="journal article" date="2006" name="Appl. Environ. Microbiol.">
        <title>Genome sequence of the chemolithoautotrophic nitrite-oxidizing bacterium Nitrobacter winogradskyi Nb-255.</title>
        <authorList>
            <person name="Starkenburg S.R."/>
            <person name="Chain P.S.G."/>
            <person name="Sayavedra-Soto L.A."/>
            <person name="Hauser L."/>
            <person name="Land M.L."/>
            <person name="Larimer F.W."/>
            <person name="Malfatti S.A."/>
            <person name="Klotz M.G."/>
            <person name="Bottomley P.J."/>
            <person name="Arp D.J."/>
            <person name="Hickey W.J."/>
        </authorList>
    </citation>
    <scope>NUCLEOTIDE SEQUENCE [LARGE SCALE GENOMIC DNA]</scope>
    <source>
        <strain>ATCC 25391 / DSM 10237 / CIP 104748 / NCIMB 11846 / Nb-255</strain>
    </source>
</reference>
<organism>
    <name type="scientific">Nitrobacter winogradskyi (strain ATCC 25391 / DSM 10237 / CIP 104748 / NCIMB 11846 / Nb-255)</name>
    <dbReference type="NCBI Taxonomy" id="323098"/>
    <lineage>
        <taxon>Bacteria</taxon>
        <taxon>Pseudomonadati</taxon>
        <taxon>Pseudomonadota</taxon>
        <taxon>Alphaproteobacteria</taxon>
        <taxon>Hyphomicrobiales</taxon>
        <taxon>Nitrobacteraceae</taxon>
        <taxon>Nitrobacter</taxon>
    </lineage>
</organism>
<keyword id="KW-0012">Acyltransferase</keyword>
<keyword id="KW-0441">Lipid A biosynthesis</keyword>
<keyword id="KW-0444">Lipid biosynthesis</keyword>
<keyword id="KW-0443">Lipid metabolism</keyword>
<keyword id="KW-1185">Reference proteome</keyword>
<keyword id="KW-0677">Repeat</keyword>
<keyword id="KW-0808">Transferase</keyword>